<comment type="function">
    <text evidence="1">F(1)F(0) ATP synthase produces ATP from ADP in the presence of a proton or sodium gradient. F-type ATPases consist of two structural domains, F(1) containing the extramembraneous catalytic core and F(0) containing the membrane proton channel, linked together by a central stalk and a peripheral stalk. During catalysis, ATP synthesis in the catalytic domain of F(1) is coupled via a rotary mechanism of the central stalk subunits to proton translocation.</text>
</comment>
<comment type="function">
    <text evidence="1">Component of the F(0) channel, it forms part of the peripheral stalk, linking F(1) to F(0).</text>
</comment>
<comment type="subunit">
    <text evidence="1">F-type ATPases have 2 components, F(1) - the catalytic core - and F(0) - the membrane proton channel. F(1) has five subunits: alpha(3), beta(3), gamma(1), delta(1), epsilon(1). F(0) has three main subunits: a(1), b(2) and c(10-14). The alpha and beta chains form an alternating ring which encloses part of the gamma chain. F(1) is attached to F(0) by a central stalk formed by the gamma and epsilon chains, while a peripheral stalk is formed by the delta and b chains.</text>
</comment>
<comment type="subcellular location">
    <subcellularLocation>
        <location evidence="1">Cell inner membrane</location>
        <topology evidence="1">Single-pass membrane protein</topology>
    </subcellularLocation>
</comment>
<comment type="similarity">
    <text evidence="1">Belongs to the ATPase B chain family.</text>
</comment>
<feature type="chain" id="PRO_0000368871" description="ATP synthase subunit b">
    <location>
        <begin position="1"/>
        <end position="156"/>
    </location>
</feature>
<feature type="transmembrane region" description="Helical" evidence="1">
    <location>
        <begin position="3"/>
        <end position="23"/>
    </location>
</feature>
<protein>
    <recommendedName>
        <fullName evidence="1">ATP synthase subunit b</fullName>
    </recommendedName>
    <alternativeName>
        <fullName evidence="1">ATP synthase F(0) sector subunit b</fullName>
    </alternativeName>
    <alternativeName>
        <fullName evidence="1">ATPase subunit I</fullName>
    </alternativeName>
    <alternativeName>
        <fullName evidence="1">F-type ATPase subunit b</fullName>
        <shortName evidence="1">F-ATPase subunit b</shortName>
    </alternativeName>
</protein>
<dbReference type="EMBL" id="AE013598">
    <property type="protein sequence ID" value="AAW73982.1"/>
    <property type="molecule type" value="Genomic_DNA"/>
</dbReference>
<dbReference type="SMR" id="Q5H4Y8"/>
<dbReference type="STRING" id="291331.XOO0728"/>
<dbReference type="KEGG" id="xoo:XOO0728"/>
<dbReference type="HOGENOM" id="CLU_079215_4_5_6"/>
<dbReference type="Proteomes" id="UP000006735">
    <property type="component" value="Chromosome"/>
</dbReference>
<dbReference type="GO" id="GO:0005886">
    <property type="term" value="C:plasma membrane"/>
    <property type="evidence" value="ECO:0007669"/>
    <property type="project" value="UniProtKB-SubCell"/>
</dbReference>
<dbReference type="GO" id="GO:0045259">
    <property type="term" value="C:proton-transporting ATP synthase complex"/>
    <property type="evidence" value="ECO:0007669"/>
    <property type="project" value="UniProtKB-KW"/>
</dbReference>
<dbReference type="GO" id="GO:0046933">
    <property type="term" value="F:proton-transporting ATP synthase activity, rotational mechanism"/>
    <property type="evidence" value="ECO:0007669"/>
    <property type="project" value="UniProtKB-UniRule"/>
</dbReference>
<dbReference type="GO" id="GO:0046961">
    <property type="term" value="F:proton-transporting ATPase activity, rotational mechanism"/>
    <property type="evidence" value="ECO:0007669"/>
    <property type="project" value="TreeGrafter"/>
</dbReference>
<dbReference type="CDD" id="cd06503">
    <property type="entry name" value="ATP-synt_Fo_b"/>
    <property type="match status" value="1"/>
</dbReference>
<dbReference type="Gene3D" id="6.10.250.1580">
    <property type="match status" value="1"/>
</dbReference>
<dbReference type="HAMAP" id="MF_01398">
    <property type="entry name" value="ATP_synth_b_bprime"/>
    <property type="match status" value="1"/>
</dbReference>
<dbReference type="InterPro" id="IPR028987">
    <property type="entry name" value="ATP_synth_B-like_membr_sf"/>
</dbReference>
<dbReference type="InterPro" id="IPR002146">
    <property type="entry name" value="ATP_synth_b/b'su_bac/chlpt"/>
</dbReference>
<dbReference type="InterPro" id="IPR005864">
    <property type="entry name" value="ATP_synth_F0_bsu_bac"/>
</dbReference>
<dbReference type="InterPro" id="IPR050059">
    <property type="entry name" value="ATP_synthase_B_chain"/>
</dbReference>
<dbReference type="NCBIfam" id="TIGR01144">
    <property type="entry name" value="ATP_synt_b"/>
    <property type="match status" value="1"/>
</dbReference>
<dbReference type="NCBIfam" id="NF004411">
    <property type="entry name" value="PRK05759.1-2"/>
    <property type="match status" value="1"/>
</dbReference>
<dbReference type="PANTHER" id="PTHR33445:SF1">
    <property type="entry name" value="ATP SYNTHASE SUBUNIT B"/>
    <property type="match status" value="1"/>
</dbReference>
<dbReference type="PANTHER" id="PTHR33445">
    <property type="entry name" value="ATP SYNTHASE SUBUNIT B', CHLOROPLASTIC"/>
    <property type="match status" value="1"/>
</dbReference>
<dbReference type="Pfam" id="PF00430">
    <property type="entry name" value="ATP-synt_B"/>
    <property type="match status" value="1"/>
</dbReference>
<dbReference type="SUPFAM" id="SSF81573">
    <property type="entry name" value="F1F0 ATP synthase subunit B, membrane domain"/>
    <property type="match status" value="1"/>
</dbReference>
<organism>
    <name type="scientific">Xanthomonas oryzae pv. oryzae (strain KACC10331 / KXO85)</name>
    <dbReference type="NCBI Taxonomy" id="291331"/>
    <lineage>
        <taxon>Bacteria</taxon>
        <taxon>Pseudomonadati</taxon>
        <taxon>Pseudomonadota</taxon>
        <taxon>Gammaproteobacteria</taxon>
        <taxon>Lysobacterales</taxon>
        <taxon>Lysobacteraceae</taxon>
        <taxon>Xanthomonas</taxon>
    </lineage>
</organism>
<reference key="1">
    <citation type="journal article" date="2005" name="Nucleic Acids Res.">
        <title>The genome sequence of Xanthomonas oryzae pathovar oryzae KACC10331, the bacterial blight pathogen of rice.</title>
        <authorList>
            <person name="Lee B.-M."/>
            <person name="Park Y.-J."/>
            <person name="Park D.-S."/>
            <person name="Kang H.-W."/>
            <person name="Kim J.-G."/>
            <person name="Song E.-S."/>
            <person name="Park I.-C."/>
            <person name="Yoon U.-H."/>
            <person name="Hahn J.-H."/>
            <person name="Koo B.-S."/>
            <person name="Lee G.-B."/>
            <person name="Kim H."/>
            <person name="Park H.-S."/>
            <person name="Yoon K.-O."/>
            <person name="Kim J.-H."/>
            <person name="Jung C.-H."/>
            <person name="Koh N.-H."/>
            <person name="Seo J.-S."/>
            <person name="Go S.-J."/>
        </authorList>
    </citation>
    <scope>NUCLEOTIDE SEQUENCE [LARGE SCALE GENOMIC DNA]</scope>
    <source>
        <strain>KACC10331 / KXO85</strain>
    </source>
</reference>
<gene>
    <name evidence="1" type="primary">atpF</name>
    <name type="ordered locus">XOO0728</name>
</gene>
<accession>Q5H4Y8</accession>
<sequence length="156" mass="17140">MDITLTIFAQALAFAGLIWIVATKIWPPLLQAIEERQQKIAEGLAAADRSQKDLAQAQEKVNEVLKDARTKANEIIDQAHARANQIIEAAKLEAIAEANRQKELAQTEIDASATRAREELRKQVSVLAVSGAEKLLKREIDANAHKALLDELAAEI</sequence>
<name>ATPF_XANOR</name>
<keyword id="KW-0066">ATP synthesis</keyword>
<keyword id="KW-0997">Cell inner membrane</keyword>
<keyword id="KW-1003">Cell membrane</keyword>
<keyword id="KW-0138">CF(0)</keyword>
<keyword id="KW-0375">Hydrogen ion transport</keyword>
<keyword id="KW-0406">Ion transport</keyword>
<keyword id="KW-0472">Membrane</keyword>
<keyword id="KW-1185">Reference proteome</keyword>
<keyword id="KW-0812">Transmembrane</keyword>
<keyword id="KW-1133">Transmembrane helix</keyword>
<keyword id="KW-0813">Transport</keyword>
<proteinExistence type="inferred from homology"/>
<evidence type="ECO:0000255" key="1">
    <source>
        <dbReference type="HAMAP-Rule" id="MF_01398"/>
    </source>
</evidence>